<name>PGK1_PIG</name>
<sequence>MSLSNKLTLDKLDVKGKRVVMRVDFNVPMKNNQITNNQRIKAAIPSIKFCLDNGAKSVVLMSHLGRPDGIPMPDKYSLEPVAVELKSLPGKDVLFLKDCVGPEVEKACADPAAGSVILLENLRFHVEEEGKGKDASGSKVKADPAKIEAFRASLSKLGDVYVNDAFGTAHRAHSSMVGVNLPKKAGGFLMKKELNYFAKALESPERPFLAILGGAKVADKIQLINNMLDKVNEMIIGGGMAFTFLKVLNNMEIGTSLFDEEGSKIVKDLMSKAEKNGVKITLPVDFVTADKFDENAKIGQATVASGIPAGWMGLDCGPESSKKYSEAVARAKQIVWNGPVGVFEWEAFAQGTKALMDEVVKATSRGCITIIGGGDTATCCAKWNTEDKVSHVSTGGGASLELLEGKVLPGVDALSNV</sequence>
<dbReference type="EC" id="2.7.11.1" evidence="2"/>
<dbReference type="EC" id="2.7.2.3" evidence="2"/>
<dbReference type="EMBL" id="AY677198">
    <property type="protein sequence ID" value="AAT77773.1"/>
    <property type="molecule type" value="mRNA"/>
</dbReference>
<dbReference type="RefSeq" id="NP_001093402.1">
    <property type="nucleotide sequence ID" value="NM_001099932.2"/>
</dbReference>
<dbReference type="PDB" id="1HDI">
    <property type="method" value="X-ray"/>
    <property type="resolution" value="1.80 A"/>
    <property type="chains" value="A=5-417"/>
</dbReference>
<dbReference type="PDB" id="1KF0">
    <property type="method" value="X-ray"/>
    <property type="resolution" value="2.50 A"/>
    <property type="chains" value="A=2-417"/>
</dbReference>
<dbReference type="PDB" id="1VJC">
    <property type="method" value="X-ray"/>
    <property type="resolution" value="2.10 A"/>
    <property type="chains" value="A=2-417"/>
</dbReference>
<dbReference type="PDB" id="1VJD">
    <property type="method" value="X-ray"/>
    <property type="resolution" value="1.90 A"/>
    <property type="chains" value="A=2-417"/>
</dbReference>
<dbReference type="PDBsum" id="1HDI"/>
<dbReference type="PDBsum" id="1KF0"/>
<dbReference type="PDBsum" id="1VJC"/>
<dbReference type="PDBsum" id="1VJD"/>
<dbReference type="SMR" id="Q7SIB7"/>
<dbReference type="FunCoup" id="Q7SIB7">
    <property type="interactions" value="727"/>
</dbReference>
<dbReference type="STRING" id="9823.ENSSSCP00000013238"/>
<dbReference type="PaxDb" id="9823-ENSSSCP00000013238"/>
<dbReference type="PeptideAtlas" id="Q7SIB7"/>
<dbReference type="GeneID" id="407608"/>
<dbReference type="KEGG" id="ssc:407608"/>
<dbReference type="CTD" id="5230"/>
<dbReference type="eggNOG" id="KOG1367">
    <property type="taxonomic scope" value="Eukaryota"/>
</dbReference>
<dbReference type="InParanoid" id="Q7SIB7"/>
<dbReference type="OrthoDB" id="275353at2759"/>
<dbReference type="BRENDA" id="2.7.2.3">
    <property type="organism ID" value="6170"/>
</dbReference>
<dbReference type="SABIO-RK" id="Q7SIB7"/>
<dbReference type="UniPathway" id="UPA00109">
    <property type="reaction ID" value="UER00185"/>
</dbReference>
<dbReference type="EvolutionaryTrace" id="Q7SIB7"/>
<dbReference type="Proteomes" id="UP000008227">
    <property type="component" value="Unplaced"/>
</dbReference>
<dbReference type="Proteomes" id="UP000314985">
    <property type="component" value="Unplaced"/>
</dbReference>
<dbReference type="Proteomes" id="UP000694570">
    <property type="component" value="Unplaced"/>
</dbReference>
<dbReference type="Proteomes" id="UP000694571">
    <property type="component" value="Unplaced"/>
</dbReference>
<dbReference type="Proteomes" id="UP000694720">
    <property type="component" value="Unplaced"/>
</dbReference>
<dbReference type="Proteomes" id="UP000694722">
    <property type="component" value="Unplaced"/>
</dbReference>
<dbReference type="Proteomes" id="UP000694723">
    <property type="component" value="Unplaced"/>
</dbReference>
<dbReference type="Proteomes" id="UP000694724">
    <property type="component" value="Unplaced"/>
</dbReference>
<dbReference type="Proteomes" id="UP000694725">
    <property type="component" value="Unplaced"/>
</dbReference>
<dbReference type="Proteomes" id="UP000694726">
    <property type="component" value="Unplaced"/>
</dbReference>
<dbReference type="Proteomes" id="UP000694727">
    <property type="component" value="Unplaced"/>
</dbReference>
<dbReference type="Proteomes" id="UP000694728">
    <property type="component" value="Unplaced"/>
</dbReference>
<dbReference type="GO" id="GO:0005829">
    <property type="term" value="C:cytosol"/>
    <property type="evidence" value="ECO:0000250"/>
    <property type="project" value="UniProtKB"/>
</dbReference>
<dbReference type="GO" id="GO:0005759">
    <property type="term" value="C:mitochondrial matrix"/>
    <property type="evidence" value="ECO:0000250"/>
    <property type="project" value="UniProtKB"/>
</dbReference>
<dbReference type="GO" id="GO:0043531">
    <property type="term" value="F:ADP binding"/>
    <property type="evidence" value="ECO:0000318"/>
    <property type="project" value="GO_Central"/>
</dbReference>
<dbReference type="GO" id="GO:0005524">
    <property type="term" value="F:ATP binding"/>
    <property type="evidence" value="ECO:0000250"/>
    <property type="project" value="UniProtKB"/>
</dbReference>
<dbReference type="GO" id="GO:0046872">
    <property type="term" value="F:metal ion binding"/>
    <property type="evidence" value="ECO:0007669"/>
    <property type="project" value="UniProtKB-KW"/>
</dbReference>
<dbReference type="GO" id="GO:0004618">
    <property type="term" value="F:phosphoglycerate kinase activity"/>
    <property type="evidence" value="ECO:0000250"/>
    <property type="project" value="UniProtKB"/>
</dbReference>
<dbReference type="GO" id="GO:0106310">
    <property type="term" value="F:protein serine kinase activity"/>
    <property type="evidence" value="ECO:0007669"/>
    <property type="project" value="RHEA"/>
</dbReference>
<dbReference type="GO" id="GO:0006094">
    <property type="term" value="P:gluconeogenesis"/>
    <property type="evidence" value="ECO:0000318"/>
    <property type="project" value="GO_Central"/>
</dbReference>
<dbReference type="GO" id="GO:0006096">
    <property type="term" value="P:glycolytic process"/>
    <property type="evidence" value="ECO:0000318"/>
    <property type="project" value="GO_Central"/>
</dbReference>
<dbReference type="CDD" id="cd00318">
    <property type="entry name" value="Phosphoglycerate_kinase"/>
    <property type="match status" value="1"/>
</dbReference>
<dbReference type="FunFam" id="3.40.50.1260:FF:000019">
    <property type="entry name" value="Phosphoglycerate kinase 1"/>
    <property type="match status" value="1"/>
</dbReference>
<dbReference type="FunFam" id="3.40.50.1260:FF:000031">
    <property type="entry name" value="Phosphoglycerate kinase 1"/>
    <property type="match status" value="1"/>
</dbReference>
<dbReference type="Gene3D" id="3.40.50.1260">
    <property type="entry name" value="Phosphoglycerate kinase, N-terminal domain"/>
    <property type="match status" value="3"/>
</dbReference>
<dbReference type="HAMAP" id="MF_00145">
    <property type="entry name" value="Phosphoglyc_kinase"/>
    <property type="match status" value="1"/>
</dbReference>
<dbReference type="InterPro" id="IPR001576">
    <property type="entry name" value="Phosphoglycerate_kinase"/>
</dbReference>
<dbReference type="InterPro" id="IPR015911">
    <property type="entry name" value="Phosphoglycerate_kinase_CS"/>
</dbReference>
<dbReference type="InterPro" id="IPR015824">
    <property type="entry name" value="Phosphoglycerate_kinase_N"/>
</dbReference>
<dbReference type="InterPro" id="IPR036043">
    <property type="entry name" value="Phosphoglycerate_kinase_sf"/>
</dbReference>
<dbReference type="PANTHER" id="PTHR11406">
    <property type="entry name" value="PHOSPHOGLYCERATE KINASE"/>
    <property type="match status" value="1"/>
</dbReference>
<dbReference type="PANTHER" id="PTHR11406:SF14">
    <property type="entry name" value="PHOSPHOGLYCERATE KINASE 1"/>
    <property type="match status" value="1"/>
</dbReference>
<dbReference type="Pfam" id="PF00162">
    <property type="entry name" value="PGK"/>
    <property type="match status" value="1"/>
</dbReference>
<dbReference type="PIRSF" id="PIRSF000724">
    <property type="entry name" value="Pgk"/>
    <property type="match status" value="1"/>
</dbReference>
<dbReference type="PRINTS" id="PR00477">
    <property type="entry name" value="PHGLYCKINASE"/>
</dbReference>
<dbReference type="SUPFAM" id="SSF53748">
    <property type="entry name" value="Phosphoglycerate kinase"/>
    <property type="match status" value="1"/>
</dbReference>
<dbReference type="PROSITE" id="PS00111">
    <property type="entry name" value="PGLYCERATE_KINASE"/>
    <property type="match status" value="1"/>
</dbReference>
<comment type="function">
    <text evidence="2">Catalyzes one of the two ATP producing reactions in the glycolytic pathway via the reversible conversion of 1,3-diphosphoglycerate to 3-phosphoglycerate. Both L- and D- forms of purine and pyrimidine nucleotides can be used as substrates, but the activity is much lower on pyrimidines. In addition to its role as a glycolytic enzyme, it seems that PGK-1 acts as a polymerase alpha cofactor protein (primer recognition protein). Acts as a protein kinase when localized to the mitochondrion where it phosphorylates pyruvate dehydrogenase kinase PDK1 to inhibit pyruvate dehydrogenase complex activity and suppress the formation of acetyl-coenzyme A from pyruvate, and consequently inhibit oxidative phosphorylation and promote glycolysis. May play a role in sperm motility.</text>
</comment>
<comment type="catalytic activity">
    <reaction evidence="2">
        <text>(2R)-3-phosphoglycerate + ATP = (2R)-3-phospho-glyceroyl phosphate + ADP</text>
        <dbReference type="Rhea" id="RHEA:14801"/>
        <dbReference type="ChEBI" id="CHEBI:30616"/>
        <dbReference type="ChEBI" id="CHEBI:57604"/>
        <dbReference type="ChEBI" id="CHEBI:58272"/>
        <dbReference type="ChEBI" id="CHEBI:456216"/>
        <dbReference type="EC" id="2.7.2.3"/>
    </reaction>
</comment>
<comment type="catalytic activity">
    <reaction evidence="2">
        <text>L-seryl-[protein] + ATP = O-phospho-L-seryl-[protein] + ADP + H(+)</text>
        <dbReference type="Rhea" id="RHEA:17989"/>
        <dbReference type="Rhea" id="RHEA-COMP:9863"/>
        <dbReference type="Rhea" id="RHEA-COMP:11604"/>
        <dbReference type="ChEBI" id="CHEBI:15378"/>
        <dbReference type="ChEBI" id="CHEBI:29999"/>
        <dbReference type="ChEBI" id="CHEBI:30616"/>
        <dbReference type="ChEBI" id="CHEBI:83421"/>
        <dbReference type="ChEBI" id="CHEBI:456216"/>
        <dbReference type="EC" id="2.7.11.1"/>
    </reaction>
</comment>
<comment type="cofactor">
    <cofactor evidence="4 5">
        <name>Mg(2+)</name>
        <dbReference type="ChEBI" id="CHEBI:18420"/>
    </cofactor>
</comment>
<comment type="pathway">
    <text evidence="2">Carbohydrate degradation; glycolysis; pyruvate from D-glyceraldehyde 3-phosphate: step 2/5.</text>
</comment>
<comment type="subunit">
    <text evidence="2 4 6">Monomer (PubMed:11178909, PubMed:15035615). Interacts with kinase MAPK1/ERK2; the interaction is direct, occurs under hypoxic conditions, and promotes its interaction with PIN1. Interacts with peptidyl-prolyl cis-trans isomerase PIN1; the interaction is direct, occurs under hypoxic conditions, and targets the protein to the mitochondrion by promoting interactions with the TOM complex. Interacts with mitochondrial circRNA mcPGK1 (via its 2nd stem-loop); the interaction is direct and targets the protein to the mitochondrion by promoting interactions with the TOM complex. Interacts with pyruvate dehydrogenase kinase PDK1; the interaction is direct, occurs under hypoxic conditions and leads to PDK1-mediated inhibition of pyruvate dehydrogenase complex activity (By similarity).</text>
</comment>
<comment type="subcellular location">
    <subcellularLocation>
        <location evidence="2">Cytoplasm</location>
        <location evidence="2">Cytosol</location>
    </subcellularLocation>
    <subcellularLocation>
        <location evidence="2">Mitochondrion matrix</location>
    </subcellularLocation>
    <text evidence="2">Hypoxic conditions promote mitochondrial targeting. Targeted to the mitochondrion following phosphorylation by MAPK1/ERK2, cis-trans isomerization by PIN1, and binding to mitochondrial circRNA mcPGK1.</text>
</comment>
<comment type="PTM">
    <text evidence="2">Phosphorylated at Ser-203 by MAPK1/ERK2 under hypoxic conditions, which promotes its mitochondrial targeting.</text>
</comment>
<comment type="similarity">
    <text evidence="7">Belongs to the phosphoglycerate kinase family.</text>
</comment>
<comment type="sequence caution" evidence="7">
    <conflict type="miscellaneous discrepancy" ref="3"/>
    <text>The sequence shown in PDB entry 1KF0 is a tentative sequence based on the electron density. It differs from that shown in 14 positions.</text>
</comment>
<reference key="1">
    <citation type="submission" date="2004-07" db="EMBL/GenBank/DDBJ databases">
        <title>Molecular cloning and characterization of porcine PGK1.</title>
        <authorList>
            <person name="Xu D.Q."/>
            <person name="Xiong Y.Z."/>
        </authorList>
    </citation>
    <scope>NUCLEOTIDE SEQUENCE [MRNA]</scope>
    <source>
        <tissue>Skeletal muscle</tissue>
    </source>
</reference>
<reference evidence="8" key="2">
    <citation type="journal article" date="2001" name="J. Mol. Biol.">
        <title>A 1.8 A resolution structure of pig muscle 3-phosphoglycerate kinase with bound MgADP and 3-phosphoglycerate in open conformation: new insight into the role of the nucleotide in domain closure.</title>
        <authorList>
            <person name="Szilagyi A.N."/>
            <person name="Ghosh M."/>
            <person name="Garman E."/>
            <person name="Vas M."/>
        </authorList>
    </citation>
    <scope>X-RAY CRYSTALLOGRAPHY (1.8 ANGSTROMS) OF 5-417 IN COMPLEX WITH SUBSTRATE AND AMP</scope>
    <scope>COFACTOR</scope>
</reference>
<reference evidence="9" key="3">
    <citation type="journal article" date="2002" name="Biochemistry">
        <title>Crystallographic and thiol-reactivity studies on the complex of pig muscle phosphoglycerate kinase with ATP analogues: correlation between nucleotide binding mode and helix flexibility.</title>
        <authorList>
            <person name="Kovari Z."/>
            <person name="Flachner B."/>
            <person name="Naray-Szabo G."/>
            <person name="Vas M."/>
        </authorList>
    </citation>
    <scope>X-RAY CRYSTALLOGRAPHY (2.5 ANGSTROMS)</scope>
    <scope>COFACTOR</scope>
</reference>
<reference evidence="10 11" key="4">
    <citation type="journal article" date="2004" name="Biochemistry">
        <title>Role of phosphate chain mobility of MgATP in completing the 3-phosphoglycerate kinase catalytic site: binding, kinetic, and crystallographic studies with ATP and MgATP.</title>
        <authorList>
            <person name="Flachner B."/>
            <person name="Kovari Z."/>
            <person name="Varga A."/>
            <person name="Gugolya Z."/>
            <person name="Vonderviszt F."/>
            <person name="Naray-Szabo G."/>
            <person name="Vas M."/>
        </authorList>
    </citation>
    <scope>X-RAY CRYSTALLOGRAPHY (1.9 ANGSTROMS) IN COMPLEX WITH ATP</scope>
</reference>
<accession>Q7SIB7</accession>
<accession>Q6B6L7</accession>
<keyword id="KW-0002">3D-structure</keyword>
<keyword id="KW-0007">Acetylation</keyword>
<keyword id="KW-0067">ATP-binding</keyword>
<keyword id="KW-0963">Cytoplasm</keyword>
<keyword id="KW-0324">Glycolysis</keyword>
<keyword id="KW-0379">Hydroxylation</keyword>
<keyword id="KW-0418">Kinase</keyword>
<keyword id="KW-0460">Magnesium</keyword>
<keyword id="KW-0479">Metal-binding</keyword>
<keyword id="KW-0496">Mitochondrion</keyword>
<keyword id="KW-0547">Nucleotide-binding</keyword>
<keyword id="KW-0597">Phosphoprotein</keyword>
<keyword id="KW-1185">Reference proteome</keyword>
<keyword id="KW-0808">Transferase</keyword>
<protein>
    <recommendedName>
        <fullName>Phosphoglycerate kinase 1</fullName>
        <ecNumber evidence="2">2.7.11.1</ecNumber>
        <ecNumber evidence="2">2.7.2.3</ecNumber>
    </recommendedName>
</protein>
<evidence type="ECO:0000250" key="1"/>
<evidence type="ECO:0000250" key="2">
    <source>
        <dbReference type="UniProtKB" id="P00558"/>
    </source>
</evidence>
<evidence type="ECO:0000250" key="3">
    <source>
        <dbReference type="UniProtKB" id="P09411"/>
    </source>
</evidence>
<evidence type="ECO:0000269" key="4">
    <source>
    </source>
</evidence>
<evidence type="ECO:0000269" key="5">
    <source>
    </source>
</evidence>
<evidence type="ECO:0000269" key="6">
    <source>
    </source>
</evidence>
<evidence type="ECO:0000305" key="7"/>
<evidence type="ECO:0007744" key="8">
    <source>
        <dbReference type="PDB" id="1HDI"/>
    </source>
</evidence>
<evidence type="ECO:0007744" key="9">
    <source>
        <dbReference type="PDB" id="1KF0"/>
    </source>
</evidence>
<evidence type="ECO:0007744" key="10">
    <source>
        <dbReference type="PDB" id="1VJC"/>
    </source>
</evidence>
<evidence type="ECO:0007744" key="11">
    <source>
        <dbReference type="PDB" id="1VJD"/>
    </source>
</evidence>
<evidence type="ECO:0007829" key="12">
    <source>
        <dbReference type="PDB" id="1HDI"/>
    </source>
</evidence>
<evidence type="ECO:0007829" key="13">
    <source>
        <dbReference type="PDB" id="1VJC"/>
    </source>
</evidence>
<evidence type="ECO:0007829" key="14">
    <source>
        <dbReference type="PDB" id="1VJD"/>
    </source>
</evidence>
<feature type="initiator methionine" description="Removed" evidence="2">
    <location>
        <position position="1"/>
    </location>
</feature>
<feature type="chain" id="PRO_0000145837" description="Phosphoglycerate kinase 1">
    <location>
        <begin position="2"/>
        <end position="417"/>
    </location>
</feature>
<feature type="region of interest" description="Mitochondrial targeting region exposed following cis-trans isomerization by PIN1 and recognized by the TOM complex for mitochondrial translocation of the protein" evidence="2">
    <location>
        <begin position="38"/>
        <end position="43"/>
    </location>
</feature>
<feature type="binding site" evidence="2">
    <location>
        <position position="23"/>
    </location>
    <ligand>
        <name>(2R)-3-phosphoglycerate</name>
        <dbReference type="ChEBI" id="CHEBI:58272"/>
    </ligand>
</feature>
<feature type="binding site" evidence="5 9">
    <location>
        <position position="24"/>
    </location>
    <ligand>
        <name>(2R)-3-phosphoglycerate</name>
        <dbReference type="ChEBI" id="CHEBI:58272"/>
    </ligand>
</feature>
<feature type="binding site" evidence="2">
    <location>
        <position position="25"/>
    </location>
    <ligand>
        <name>(2R)-3-phosphoglycerate</name>
        <dbReference type="ChEBI" id="CHEBI:58272"/>
    </ligand>
</feature>
<feature type="binding site" evidence="4 5 8 9">
    <location>
        <position position="26"/>
    </location>
    <ligand>
        <name>(2R)-3-phosphoglycerate</name>
        <dbReference type="ChEBI" id="CHEBI:58272"/>
    </ligand>
</feature>
<feature type="binding site" evidence="2">
    <location>
        <position position="38"/>
    </location>
    <ligand>
        <name>(2R)-3-phosphoglycerate</name>
        <dbReference type="ChEBI" id="CHEBI:58272"/>
    </ligand>
</feature>
<feature type="binding site" evidence="4 5 8 9">
    <location>
        <position position="39"/>
    </location>
    <ligand>
        <name>(2R)-3-phosphoglycerate</name>
        <dbReference type="ChEBI" id="CHEBI:58272"/>
    </ligand>
</feature>
<feature type="binding site" evidence="2">
    <location>
        <position position="62"/>
    </location>
    <ligand>
        <name>(2R)-3-phosphoglycerate</name>
        <dbReference type="ChEBI" id="CHEBI:58272"/>
    </ligand>
</feature>
<feature type="binding site" evidence="5 9">
    <location>
        <position position="63"/>
    </location>
    <ligand>
        <name>(2R)-3-phosphoglycerate</name>
        <dbReference type="ChEBI" id="CHEBI:58272"/>
    </ligand>
</feature>
<feature type="binding site" evidence="2">
    <location>
        <position position="65"/>
    </location>
    <ligand>
        <name>(2R)-3-phosphoglycerate</name>
        <dbReference type="ChEBI" id="CHEBI:58272"/>
    </ligand>
</feature>
<feature type="binding site" evidence="4 8">
    <location>
        <position position="66"/>
    </location>
    <ligand>
        <name>(2R)-3-phosphoglycerate</name>
        <dbReference type="ChEBI" id="CHEBI:58272"/>
    </ligand>
</feature>
<feature type="binding site" evidence="2">
    <location>
        <position position="122"/>
    </location>
    <ligand>
        <name>(2R)-3-phosphoglycerate</name>
        <dbReference type="ChEBI" id="CHEBI:58272"/>
    </ligand>
</feature>
<feature type="binding site" evidence="4 5 8 9">
    <location>
        <position position="123"/>
    </location>
    <ligand>
        <name>(2R)-3-phosphoglycerate</name>
        <dbReference type="ChEBI" id="CHEBI:58272"/>
    </ligand>
</feature>
<feature type="binding site" evidence="2">
    <location>
        <position position="170"/>
    </location>
    <ligand>
        <name>(2R)-3-phosphoglycerate</name>
        <dbReference type="ChEBI" id="CHEBI:58272"/>
    </ligand>
</feature>
<feature type="binding site" evidence="4 5 8 9">
    <location>
        <position position="171"/>
    </location>
    <ligand>
        <name>(2R)-3-phosphoglycerate</name>
        <dbReference type="ChEBI" id="CHEBI:58272"/>
    </ligand>
</feature>
<feature type="binding site" evidence="2">
    <location>
        <position position="214"/>
    </location>
    <ligand>
        <name>ADP</name>
        <dbReference type="ChEBI" id="CHEBI:456216"/>
    </ligand>
</feature>
<feature type="binding site" evidence="2">
    <location>
        <position position="214"/>
    </location>
    <ligand>
        <name>CDP</name>
        <dbReference type="ChEBI" id="CHEBI:58069"/>
    </ligand>
</feature>
<feature type="binding site" evidence="4 8">
    <location>
        <position position="215"/>
    </location>
    <ligand>
        <name>AMP</name>
        <dbReference type="ChEBI" id="CHEBI:456215"/>
    </ligand>
</feature>
<feature type="binding site" evidence="6 10 11">
    <location>
        <position position="215"/>
    </location>
    <ligand>
        <name>ATP</name>
        <dbReference type="ChEBI" id="CHEBI:30616"/>
    </ligand>
</feature>
<feature type="binding site" evidence="2">
    <location>
        <position position="215"/>
    </location>
    <ligand>
        <name>Mg(2+)</name>
        <dbReference type="ChEBI" id="CHEBI:18420"/>
    </ligand>
</feature>
<feature type="binding site" evidence="4 8">
    <location>
        <position position="216"/>
    </location>
    <ligand>
        <name>AMP</name>
        <dbReference type="ChEBI" id="CHEBI:456215"/>
    </ligand>
</feature>
<feature type="binding site" evidence="2">
    <location>
        <position position="218"/>
    </location>
    <ligand>
        <name>Mg(2+)</name>
        <dbReference type="ChEBI" id="CHEBI:18420"/>
    </ligand>
</feature>
<feature type="binding site" evidence="2">
    <location>
        <position position="219"/>
    </location>
    <ligand>
        <name>CDP</name>
        <dbReference type="ChEBI" id="CHEBI:58069"/>
    </ligand>
</feature>
<feature type="binding site" evidence="5 9">
    <location>
        <position position="219"/>
    </location>
    <ligand>
        <name>Mg(2+)</name>
        <dbReference type="ChEBI" id="CHEBI:18420"/>
    </ligand>
</feature>
<feature type="binding site" evidence="4 8">
    <location>
        <position position="220"/>
    </location>
    <ligand>
        <name>AMP</name>
        <dbReference type="ChEBI" id="CHEBI:456215"/>
    </ligand>
</feature>
<feature type="binding site" evidence="6 10 11">
    <location>
        <position position="220"/>
    </location>
    <ligand>
        <name>ATP</name>
        <dbReference type="ChEBI" id="CHEBI:30616"/>
    </ligand>
</feature>
<feature type="binding site" evidence="2">
    <location>
        <position position="238"/>
    </location>
    <ligand>
        <name>ADP</name>
        <dbReference type="ChEBI" id="CHEBI:456216"/>
    </ligand>
</feature>
<feature type="binding site" evidence="2">
    <location>
        <position position="238"/>
    </location>
    <ligand>
        <name>CDP</name>
        <dbReference type="ChEBI" id="CHEBI:58069"/>
    </ligand>
</feature>
<feature type="binding site" evidence="4 8">
    <location>
        <position position="239"/>
    </location>
    <ligand>
        <name>AMP</name>
        <dbReference type="ChEBI" id="CHEBI:456215"/>
    </ligand>
</feature>
<feature type="binding site" evidence="6 10 11">
    <location>
        <position position="239"/>
    </location>
    <ligand>
        <name>ATP</name>
        <dbReference type="ChEBI" id="CHEBI:30616"/>
    </ligand>
</feature>
<feature type="binding site" evidence="4 8">
    <location>
        <position position="313"/>
    </location>
    <ligand>
        <name>AMP</name>
        <dbReference type="ChEBI" id="CHEBI:456215"/>
    </ligand>
</feature>
<feature type="binding site" evidence="6 10 11">
    <location>
        <position position="313"/>
    </location>
    <ligand>
        <name>ATP</name>
        <dbReference type="ChEBI" id="CHEBI:30616"/>
    </ligand>
</feature>
<feature type="binding site" evidence="2">
    <location>
        <position position="338"/>
    </location>
    <ligand>
        <name>CDP</name>
        <dbReference type="ChEBI" id="CHEBI:58069"/>
    </ligand>
</feature>
<feature type="binding site" evidence="2">
    <location>
        <position position="340"/>
    </location>
    <ligand>
        <name>CDP</name>
        <dbReference type="ChEBI" id="CHEBI:58069"/>
    </ligand>
</feature>
<feature type="binding site" evidence="2">
    <location>
        <position position="343"/>
    </location>
    <ligand>
        <name>ADP</name>
        <dbReference type="ChEBI" id="CHEBI:456216"/>
    </ligand>
</feature>
<feature type="binding site" evidence="2">
    <location>
        <position position="343"/>
    </location>
    <ligand>
        <name>CDP</name>
        <dbReference type="ChEBI" id="CHEBI:58069"/>
    </ligand>
</feature>
<feature type="binding site" evidence="4 8">
    <location>
        <position position="344"/>
    </location>
    <ligand>
        <name>AMP</name>
        <dbReference type="ChEBI" id="CHEBI:456215"/>
    </ligand>
</feature>
<feature type="binding site" evidence="6 10 11">
    <location>
        <position position="344"/>
    </location>
    <ligand>
        <name>ATP</name>
        <dbReference type="ChEBI" id="CHEBI:30616"/>
    </ligand>
</feature>
<feature type="binding site" evidence="6 11">
    <location>
        <position position="375"/>
    </location>
    <ligand>
        <name>ATP</name>
        <dbReference type="ChEBI" id="CHEBI:30616"/>
    </ligand>
</feature>
<feature type="binding site" evidence="4 8">
    <location>
        <position position="375"/>
    </location>
    <ligand>
        <name>Mg(2+)</name>
        <dbReference type="ChEBI" id="CHEBI:18420"/>
    </ligand>
</feature>
<feature type="binding site" evidence="6 11">
    <location>
        <position position="376"/>
    </location>
    <ligand>
        <name>ATP</name>
        <dbReference type="ChEBI" id="CHEBI:30616"/>
    </ligand>
</feature>
<feature type="modified residue" description="N-acetylserine" evidence="2">
    <location>
        <position position="2"/>
    </location>
</feature>
<feature type="modified residue" description="Phosphoserine" evidence="2">
    <location>
        <position position="2"/>
    </location>
</feature>
<feature type="modified residue" description="Phosphoserine" evidence="2">
    <location>
        <position position="4"/>
    </location>
</feature>
<feature type="modified residue" description="N6-succinyllysine" evidence="3">
    <location>
        <position position="6"/>
    </location>
</feature>
<feature type="modified residue" description="N6-acetyllysine" evidence="2">
    <location>
        <position position="11"/>
    </location>
</feature>
<feature type="modified residue" description="N6-acetyllysine; alternate" evidence="2">
    <location>
        <position position="48"/>
    </location>
</feature>
<feature type="modified residue" description="N6-succinyllysine; alternate" evidence="3">
    <location>
        <position position="48"/>
    </location>
</feature>
<feature type="modified residue" description="N6-acetyllysine" evidence="2">
    <location>
        <position position="75"/>
    </location>
</feature>
<feature type="modified residue" description="Phosphotyrosine" evidence="3">
    <location>
        <position position="76"/>
    </location>
</feature>
<feature type="modified residue" description="N6-acetyllysine" evidence="2">
    <location>
        <position position="86"/>
    </location>
</feature>
<feature type="modified residue" description="N6-acetyllysine" evidence="3">
    <location>
        <position position="91"/>
    </location>
</feature>
<feature type="modified residue" description="N6-(2-hydroxyisobutyryl)lysine; alternate" evidence="2">
    <location>
        <position position="97"/>
    </location>
</feature>
<feature type="modified residue" description="N6-acetyllysine; alternate" evidence="2">
    <location>
        <position position="97"/>
    </location>
</feature>
<feature type="modified residue" description="N6-acetyllysine; alternate" evidence="2">
    <location>
        <position position="131"/>
    </location>
</feature>
<feature type="modified residue" description="N6-malonyllysine; alternate" evidence="1">
    <location>
        <position position="131"/>
    </location>
</feature>
<feature type="modified residue" description="N6-acetyllysine" evidence="2">
    <location>
        <position position="146"/>
    </location>
</feature>
<feature type="modified residue" description="N6-succinyllysine" evidence="3">
    <location>
        <position position="191"/>
    </location>
</feature>
<feature type="modified residue" description="Phosphotyrosine" evidence="2">
    <location>
        <position position="196"/>
    </location>
</feature>
<feature type="modified residue" description="N6-acetyllysine" evidence="2">
    <location>
        <position position="199"/>
    </location>
</feature>
<feature type="modified residue" description="Phosphoserine" evidence="2">
    <location>
        <position position="203"/>
    </location>
</feature>
<feature type="modified residue" description="N6-(2-hydroxyisobutyryl)lysine" evidence="2">
    <location>
        <position position="216"/>
    </location>
</feature>
<feature type="modified residue" description="N6-(2-hydroxyisobutyryl)lysine" evidence="2">
    <location>
        <position position="220"/>
    </location>
</feature>
<feature type="modified residue" description="N6-acetyllysine" evidence="2">
    <location>
        <position position="267"/>
    </location>
</feature>
<feature type="modified residue" description="N6-acetyllysine" evidence="2">
    <location>
        <position position="291"/>
    </location>
</feature>
<feature type="modified residue" description="N6-(2-hydroxyisobutyryl)lysine" evidence="2">
    <location>
        <position position="323"/>
    </location>
</feature>
<feature type="modified residue" description="N6-acetyllysine" evidence="3">
    <location>
        <position position="361"/>
    </location>
</feature>
<feature type="helix" evidence="14">
    <location>
        <begin position="3"/>
        <end position="5"/>
    </location>
</feature>
<feature type="helix" evidence="12">
    <location>
        <begin position="9"/>
        <end position="11"/>
    </location>
</feature>
<feature type="strand" evidence="12">
    <location>
        <begin position="18"/>
        <end position="22"/>
    </location>
</feature>
<feature type="strand" evidence="12">
    <location>
        <begin position="29"/>
        <end position="35"/>
    </location>
</feature>
<feature type="helix" evidence="12">
    <location>
        <begin position="38"/>
        <end position="52"/>
    </location>
</feature>
<feature type="strand" evidence="12">
    <location>
        <begin position="56"/>
        <end position="61"/>
    </location>
</feature>
<feature type="turn" evidence="12">
    <location>
        <begin position="73"/>
        <end position="75"/>
    </location>
</feature>
<feature type="helix" evidence="12">
    <location>
        <begin position="79"/>
        <end position="89"/>
    </location>
</feature>
<feature type="strand" evidence="13">
    <location>
        <begin position="93"/>
        <end position="95"/>
    </location>
</feature>
<feature type="strand" evidence="12">
    <location>
        <begin position="99"/>
        <end position="101"/>
    </location>
</feature>
<feature type="helix" evidence="12">
    <location>
        <begin position="102"/>
        <end position="109"/>
    </location>
</feature>
<feature type="strand" evidence="12">
    <location>
        <begin position="115"/>
        <end position="118"/>
    </location>
</feature>
<feature type="helix" evidence="12">
    <location>
        <begin position="122"/>
        <end position="124"/>
    </location>
</feature>
<feature type="turn" evidence="12">
    <location>
        <begin position="126"/>
        <end position="130"/>
    </location>
</feature>
<feature type="strand" evidence="12">
    <location>
        <begin position="131"/>
        <end position="133"/>
    </location>
</feature>
<feature type="strand" evidence="12">
    <location>
        <begin position="139"/>
        <end position="141"/>
    </location>
</feature>
<feature type="helix" evidence="12">
    <location>
        <begin position="144"/>
        <end position="156"/>
    </location>
</feature>
<feature type="strand" evidence="12">
    <location>
        <begin position="159"/>
        <end position="163"/>
    </location>
</feature>
<feature type="helix" evidence="12">
    <location>
        <begin position="166"/>
        <end position="168"/>
    </location>
</feature>
<feature type="helix" evidence="12">
    <location>
        <begin position="174"/>
        <end position="177"/>
    </location>
</feature>
<feature type="strand" evidence="12">
    <location>
        <begin position="184"/>
        <end position="186"/>
    </location>
</feature>
<feature type="helix" evidence="12">
    <location>
        <begin position="188"/>
        <end position="201"/>
    </location>
</feature>
<feature type="strand" evidence="12">
    <location>
        <begin position="206"/>
        <end position="212"/>
    </location>
</feature>
<feature type="helix" evidence="12">
    <location>
        <begin position="218"/>
        <end position="220"/>
    </location>
</feature>
<feature type="helix" evidence="12">
    <location>
        <begin position="221"/>
        <end position="228"/>
    </location>
</feature>
<feature type="strand" evidence="12">
    <location>
        <begin position="232"/>
        <end position="236"/>
    </location>
</feature>
<feature type="helix" evidence="12">
    <location>
        <begin position="238"/>
        <end position="240"/>
    </location>
</feature>
<feature type="helix" evidence="12">
    <location>
        <begin position="241"/>
        <end position="249"/>
    </location>
</feature>
<feature type="helix" evidence="12">
    <location>
        <begin position="262"/>
        <end position="264"/>
    </location>
</feature>
<feature type="helix" evidence="12">
    <location>
        <begin position="266"/>
        <end position="276"/>
    </location>
</feature>
<feature type="strand" evidence="12">
    <location>
        <begin position="279"/>
        <end position="281"/>
    </location>
</feature>
<feature type="strand" evidence="12">
    <location>
        <begin position="285"/>
        <end position="293"/>
    </location>
</feature>
<feature type="strand" evidence="12">
    <location>
        <begin position="298"/>
        <end position="302"/>
    </location>
</feature>
<feature type="turn" evidence="12">
    <location>
        <begin position="303"/>
        <end position="305"/>
    </location>
</feature>
<feature type="strand" evidence="12">
    <location>
        <begin position="312"/>
        <end position="316"/>
    </location>
</feature>
<feature type="helix" evidence="12">
    <location>
        <begin position="318"/>
        <end position="330"/>
    </location>
</feature>
<feature type="strand" evidence="12">
    <location>
        <begin position="332"/>
        <end position="338"/>
    </location>
</feature>
<feature type="helix" evidence="12">
    <location>
        <begin position="346"/>
        <end position="348"/>
    </location>
</feature>
<feature type="helix" evidence="12">
    <location>
        <begin position="350"/>
        <end position="364"/>
    </location>
</feature>
<feature type="strand" evidence="12">
    <location>
        <begin position="368"/>
        <end position="371"/>
    </location>
</feature>
<feature type="helix" evidence="12">
    <location>
        <begin position="375"/>
        <end position="382"/>
    </location>
</feature>
<feature type="turn" evidence="12">
    <location>
        <begin position="386"/>
        <end position="388"/>
    </location>
</feature>
<feature type="strand" evidence="12">
    <location>
        <begin position="389"/>
        <end position="392"/>
    </location>
</feature>
<feature type="helix" evidence="12">
    <location>
        <begin position="396"/>
        <end position="403"/>
    </location>
</feature>
<feature type="helix" evidence="12">
    <location>
        <begin position="409"/>
        <end position="412"/>
    </location>
</feature>
<proteinExistence type="evidence at protein level"/>
<organism>
    <name type="scientific">Sus scrofa</name>
    <name type="common">Pig</name>
    <dbReference type="NCBI Taxonomy" id="9823"/>
    <lineage>
        <taxon>Eukaryota</taxon>
        <taxon>Metazoa</taxon>
        <taxon>Chordata</taxon>
        <taxon>Craniata</taxon>
        <taxon>Vertebrata</taxon>
        <taxon>Euteleostomi</taxon>
        <taxon>Mammalia</taxon>
        <taxon>Eutheria</taxon>
        <taxon>Laurasiatheria</taxon>
        <taxon>Artiodactyla</taxon>
        <taxon>Suina</taxon>
        <taxon>Suidae</taxon>
        <taxon>Sus</taxon>
    </lineage>
</organism>
<gene>
    <name type="primary">PGK1</name>
</gene>